<sequence>MAQQRALPQSKETLLQSYNKRLKDDIKSIMDNFTEIIKTAKIEDETQVSRATQGEQDNYEMHVRAANIVRAGESLMKLVSDLKQFLILNDFPSVNEAIDQRNQQLRTLQEECDRKLITLRDEISIDLYELEEEYYSSSSSLCEANDLPLCEAYGRLDLDTDSADGLSAPLLASPEPSAGPLQVAAPAHSHAGGPGPTEHA</sequence>
<organism>
    <name type="scientific">Homo sapiens</name>
    <name type="common">Human</name>
    <dbReference type="NCBI Taxonomy" id="9606"/>
    <lineage>
        <taxon>Eukaryota</taxon>
        <taxon>Metazoa</taxon>
        <taxon>Chordata</taxon>
        <taxon>Craniata</taxon>
        <taxon>Vertebrata</taxon>
        <taxon>Euteleostomi</taxon>
        <taxon>Mammalia</taxon>
        <taxon>Eutheria</taxon>
        <taxon>Euarchontoglires</taxon>
        <taxon>Primates</taxon>
        <taxon>Haplorrhini</taxon>
        <taxon>Catarrhini</taxon>
        <taxon>Hominidae</taxon>
        <taxon>Homo</taxon>
    </lineage>
</organism>
<name>MED22_HUMAN</name>
<evidence type="ECO:0000255" key="1"/>
<evidence type="ECO:0000256" key="2">
    <source>
        <dbReference type="SAM" id="MobiDB-lite"/>
    </source>
</evidence>
<evidence type="ECO:0000269" key="3">
    <source>
    </source>
</evidence>
<evidence type="ECO:0000303" key="4">
    <source>
    </source>
</evidence>
<evidence type="ECO:0000303" key="5">
    <source>
    </source>
</evidence>
<evidence type="ECO:0000303" key="6">
    <source>
    </source>
</evidence>
<evidence type="ECO:0000305" key="7"/>
<evidence type="ECO:0007829" key="8">
    <source>
        <dbReference type="PDB" id="7EMF"/>
    </source>
</evidence>
<reference key="1">
    <citation type="journal article" date="1995" name="Genomics">
        <title>Surf5: a gene in the tightly clustered mouse surfeit locus is highly conserved and transcribed divergently from the rpL7A (Surf3) gene.</title>
        <authorList>
            <person name="Garson K."/>
            <person name="Duhig T."/>
            <person name="Armes N."/>
            <person name="Colombo P."/>
            <person name="Fried M."/>
        </authorList>
    </citation>
    <scope>NUCLEOTIDE SEQUENCE [MRNA] (ISOFORM SURF5A)</scope>
</reference>
<reference key="2">
    <citation type="journal article" date="2002" name="Gene">
        <title>The human homologue of the mouse Surf5 gene encodes multiple alternatively spliced transcripts.</title>
        <authorList>
            <person name="Angiolillo A."/>
            <person name="Russo G."/>
            <person name="Porcellini A."/>
            <person name="Smaldone S."/>
            <person name="D'Alessandro F."/>
            <person name="Pietropaolo C."/>
        </authorList>
    </citation>
    <scope>NUCLEOTIDE SEQUENCE [GENOMIC DNA / MRNA]</scope>
    <scope>ALTERNATIVE SPLICING</scope>
</reference>
<reference key="3">
    <citation type="journal article" date="2004" name="Nat. Genet.">
        <title>Complete sequencing and characterization of 21,243 full-length human cDNAs.</title>
        <authorList>
            <person name="Ota T."/>
            <person name="Suzuki Y."/>
            <person name="Nishikawa T."/>
            <person name="Otsuki T."/>
            <person name="Sugiyama T."/>
            <person name="Irie R."/>
            <person name="Wakamatsu A."/>
            <person name="Hayashi K."/>
            <person name="Sato H."/>
            <person name="Nagai K."/>
            <person name="Kimura K."/>
            <person name="Makita H."/>
            <person name="Sekine M."/>
            <person name="Obayashi M."/>
            <person name="Nishi T."/>
            <person name="Shibahara T."/>
            <person name="Tanaka T."/>
            <person name="Ishii S."/>
            <person name="Yamamoto J."/>
            <person name="Saito K."/>
            <person name="Kawai Y."/>
            <person name="Isono Y."/>
            <person name="Nakamura Y."/>
            <person name="Nagahari K."/>
            <person name="Murakami K."/>
            <person name="Yasuda T."/>
            <person name="Iwayanagi T."/>
            <person name="Wagatsuma M."/>
            <person name="Shiratori A."/>
            <person name="Sudo H."/>
            <person name="Hosoiri T."/>
            <person name="Kaku Y."/>
            <person name="Kodaira H."/>
            <person name="Kondo H."/>
            <person name="Sugawara M."/>
            <person name="Takahashi M."/>
            <person name="Kanda K."/>
            <person name="Yokoi T."/>
            <person name="Furuya T."/>
            <person name="Kikkawa E."/>
            <person name="Omura Y."/>
            <person name="Abe K."/>
            <person name="Kamihara K."/>
            <person name="Katsuta N."/>
            <person name="Sato K."/>
            <person name="Tanikawa M."/>
            <person name="Yamazaki M."/>
            <person name="Ninomiya K."/>
            <person name="Ishibashi T."/>
            <person name="Yamashita H."/>
            <person name="Murakawa K."/>
            <person name="Fujimori K."/>
            <person name="Tanai H."/>
            <person name="Kimata M."/>
            <person name="Watanabe M."/>
            <person name="Hiraoka S."/>
            <person name="Chiba Y."/>
            <person name="Ishida S."/>
            <person name="Ono Y."/>
            <person name="Takiguchi S."/>
            <person name="Watanabe S."/>
            <person name="Yosida M."/>
            <person name="Hotuta T."/>
            <person name="Kusano J."/>
            <person name="Kanehori K."/>
            <person name="Takahashi-Fujii A."/>
            <person name="Hara H."/>
            <person name="Tanase T.-O."/>
            <person name="Nomura Y."/>
            <person name="Togiya S."/>
            <person name="Komai F."/>
            <person name="Hara R."/>
            <person name="Takeuchi K."/>
            <person name="Arita M."/>
            <person name="Imose N."/>
            <person name="Musashino K."/>
            <person name="Yuuki H."/>
            <person name="Oshima A."/>
            <person name="Sasaki N."/>
            <person name="Aotsuka S."/>
            <person name="Yoshikawa Y."/>
            <person name="Matsunawa H."/>
            <person name="Ichihara T."/>
            <person name="Shiohata N."/>
            <person name="Sano S."/>
            <person name="Moriya S."/>
            <person name="Momiyama H."/>
            <person name="Satoh N."/>
            <person name="Takami S."/>
            <person name="Terashima Y."/>
            <person name="Suzuki O."/>
            <person name="Nakagawa S."/>
            <person name="Senoh A."/>
            <person name="Mizoguchi H."/>
            <person name="Goto Y."/>
            <person name="Shimizu F."/>
            <person name="Wakebe H."/>
            <person name="Hishigaki H."/>
            <person name="Watanabe T."/>
            <person name="Sugiyama A."/>
            <person name="Takemoto M."/>
            <person name="Kawakami B."/>
            <person name="Yamazaki M."/>
            <person name="Watanabe K."/>
            <person name="Kumagai A."/>
            <person name="Itakura S."/>
            <person name="Fukuzumi Y."/>
            <person name="Fujimori Y."/>
            <person name="Komiyama M."/>
            <person name="Tashiro H."/>
            <person name="Tanigami A."/>
            <person name="Fujiwara T."/>
            <person name="Ono T."/>
            <person name="Yamada K."/>
            <person name="Fujii Y."/>
            <person name="Ozaki K."/>
            <person name="Hirao M."/>
            <person name="Ohmori Y."/>
            <person name="Kawabata A."/>
            <person name="Hikiji T."/>
            <person name="Kobatake N."/>
            <person name="Inagaki H."/>
            <person name="Ikema Y."/>
            <person name="Okamoto S."/>
            <person name="Okitani R."/>
            <person name="Kawakami T."/>
            <person name="Noguchi S."/>
            <person name="Itoh T."/>
            <person name="Shigeta K."/>
            <person name="Senba T."/>
            <person name="Matsumura K."/>
            <person name="Nakajima Y."/>
            <person name="Mizuno T."/>
            <person name="Morinaga M."/>
            <person name="Sasaki M."/>
            <person name="Togashi T."/>
            <person name="Oyama M."/>
            <person name="Hata H."/>
            <person name="Watanabe M."/>
            <person name="Komatsu T."/>
            <person name="Mizushima-Sugano J."/>
            <person name="Satoh T."/>
            <person name="Shirai Y."/>
            <person name="Takahashi Y."/>
            <person name="Nakagawa K."/>
            <person name="Okumura K."/>
            <person name="Nagase T."/>
            <person name="Nomura N."/>
            <person name="Kikuchi H."/>
            <person name="Masuho Y."/>
            <person name="Yamashita R."/>
            <person name="Nakai K."/>
            <person name="Yada T."/>
            <person name="Nakamura Y."/>
            <person name="Ohara O."/>
            <person name="Isogai T."/>
            <person name="Sugano S."/>
        </authorList>
    </citation>
    <scope>NUCLEOTIDE SEQUENCE [LARGE SCALE MRNA] (ISOFORMS SURF5B AND SURF5A)</scope>
    <source>
        <tissue>Cerebellum</tissue>
        <tissue>Testis</tissue>
    </source>
</reference>
<reference key="4">
    <citation type="journal article" date="2004" name="Nature">
        <title>DNA sequence and analysis of human chromosome 9.</title>
        <authorList>
            <person name="Humphray S.J."/>
            <person name="Oliver K."/>
            <person name="Hunt A.R."/>
            <person name="Plumb R.W."/>
            <person name="Loveland J.E."/>
            <person name="Howe K.L."/>
            <person name="Andrews T.D."/>
            <person name="Searle S."/>
            <person name="Hunt S.E."/>
            <person name="Scott C.E."/>
            <person name="Jones M.C."/>
            <person name="Ainscough R."/>
            <person name="Almeida J.P."/>
            <person name="Ambrose K.D."/>
            <person name="Ashwell R.I.S."/>
            <person name="Babbage A.K."/>
            <person name="Babbage S."/>
            <person name="Bagguley C.L."/>
            <person name="Bailey J."/>
            <person name="Banerjee R."/>
            <person name="Barker D.J."/>
            <person name="Barlow K.F."/>
            <person name="Bates K."/>
            <person name="Beasley H."/>
            <person name="Beasley O."/>
            <person name="Bird C.P."/>
            <person name="Bray-Allen S."/>
            <person name="Brown A.J."/>
            <person name="Brown J.Y."/>
            <person name="Burford D."/>
            <person name="Burrill W."/>
            <person name="Burton J."/>
            <person name="Carder C."/>
            <person name="Carter N.P."/>
            <person name="Chapman J.C."/>
            <person name="Chen Y."/>
            <person name="Clarke G."/>
            <person name="Clark S.Y."/>
            <person name="Clee C.M."/>
            <person name="Clegg S."/>
            <person name="Collier R.E."/>
            <person name="Corby N."/>
            <person name="Crosier M."/>
            <person name="Cummings A.T."/>
            <person name="Davies J."/>
            <person name="Dhami P."/>
            <person name="Dunn M."/>
            <person name="Dutta I."/>
            <person name="Dyer L.W."/>
            <person name="Earthrowl M.E."/>
            <person name="Faulkner L."/>
            <person name="Fleming C.J."/>
            <person name="Frankish A."/>
            <person name="Frankland J.A."/>
            <person name="French L."/>
            <person name="Fricker D.G."/>
            <person name="Garner P."/>
            <person name="Garnett J."/>
            <person name="Ghori J."/>
            <person name="Gilbert J.G.R."/>
            <person name="Glison C."/>
            <person name="Grafham D.V."/>
            <person name="Gribble S."/>
            <person name="Griffiths C."/>
            <person name="Griffiths-Jones S."/>
            <person name="Grocock R."/>
            <person name="Guy J."/>
            <person name="Hall R.E."/>
            <person name="Hammond S."/>
            <person name="Harley J.L."/>
            <person name="Harrison E.S.I."/>
            <person name="Hart E.A."/>
            <person name="Heath P.D."/>
            <person name="Henderson C.D."/>
            <person name="Hopkins B.L."/>
            <person name="Howard P.J."/>
            <person name="Howden P.J."/>
            <person name="Huckle E."/>
            <person name="Johnson C."/>
            <person name="Johnson D."/>
            <person name="Joy A.A."/>
            <person name="Kay M."/>
            <person name="Keenan S."/>
            <person name="Kershaw J.K."/>
            <person name="Kimberley A.M."/>
            <person name="King A."/>
            <person name="Knights A."/>
            <person name="Laird G.K."/>
            <person name="Langford C."/>
            <person name="Lawlor S."/>
            <person name="Leongamornlert D.A."/>
            <person name="Leversha M."/>
            <person name="Lloyd C."/>
            <person name="Lloyd D.M."/>
            <person name="Lovell J."/>
            <person name="Martin S."/>
            <person name="Mashreghi-Mohammadi M."/>
            <person name="Matthews L."/>
            <person name="McLaren S."/>
            <person name="McLay K.E."/>
            <person name="McMurray A."/>
            <person name="Milne S."/>
            <person name="Nickerson T."/>
            <person name="Nisbett J."/>
            <person name="Nordsiek G."/>
            <person name="Pearce A.V."/>
            <person name="Peck A.I."/>
            <person name="Porter K.M."/>
            <person name="Pandian R."/>
            <person name="Pelan S."/>
            <person name="Phillimore B."/>
            <person name="Povey S."/>
            <person name="Ramsey Y."/>
            <person name="Rand V."/>
            <person name="Scharfe M."/>
            <person name="Sehra H.K."/>
            <person name="Shownkeen R."/>
            <person name="Sims S.K."/>
            <person name="Skuce C.D."/>
            <person name="Smith M."/>
            <person name="Steward C.A."/>
            <person name="Swarbreck D."/>
            <person name="Sycamore N."/>
            <person name="Tester J."/>
            <person name="Thorpe A."/>
            <person name="Tracey A."/>
            <person name="Tromans A."/>
            <person name="Thomas D.W."/>
            <person name="Wall M."/>
            <person name="Wallis J.M."/>
            <person name="West A.P."/>
            <person name="Whitehead S.L."/>
            <person name="Willey D.L."/>
            <person name="Williams S.A."/>
            <person name="Wilming L."/>
            <person name="Wray P.W."/>
            <person name="Young L."/>
            <person name="Ashurst J.L."/>
            <person name="Coulson A."/>
            <person name="Blocker H."/>
            <person name="Durbin R.M."/>
            <person name="Sulston J.E."/>
            <person name="Hubbard T."/>
            <person name="Jackson M.J."/>
            <person name="Bentley D.R."/>
            <person name="Beck S."/>
            <person name="Rogers J."/>
            <person name="Dunham I."/>
        </authorList>
    </citation>
    <scope>NUCLEOTIDE SEQUENCE [LARGE SCALE GENOMIC DNA]</scope>
</reference>
<reference key="5">
    <citation type="submission" date="2005-07" db="EMBL/GenBank/DDBJ databases">
        <authorList>
            <person name="Mural R.J."/>
            <person name="Istrail S."/>
            <person name="Sutton G.G."/>
            <person name="Florea L."/>
            <person name="Halpern A.L."/>
            <person name="Mobarry C.M."/>
            <person name="Lippert R."/>
            <person name="Walenz B."/>
            <person name="Shatkay H."/>
            <person name="Dew I."/>
            <person name="Miller J.R."/>
            <person name="Flanigan M.J."/>
            <person name="Edwards N.J."/>
            <person name="Bolanos R."/>
            <person name="Fasulo D."/>
            <person name="Halldorsson B.V."/>
            <person name="Hannenhalli S."/>
            <person name="Turner R."/>
            <person name="Yooseph S."/>
            <person name="Lu F."/>
            <person name="Nusskern D.R."/>
            <person name="Shue B.C."/>
            <person name="Zheng X.H."/>
            <person name="Zhong F."/>
            <person name="Delcher A.L."/>
            <person name="Huson D.H."/>
            <person name="Kravitz S.A."/>
            <person name="Mouchard L."/>
            <person name="Reinert K."/>
            <person name="Remington K.A."/>
            <person name="Clark A.G."/>
            <person name="Waterman M.S."/>
            <person name="Eichler E.E."/>
            <person name="Adams M.D."/>
            <person name="Hunkapiller M.W."/>
            <person name="Myers E.W."/>
            <person name="Venter J.C."/>
        </authorList>
    </citation>
    <scope>NUCLEOTIDE SEQUENCE [LARGE SCALE GENOMIC DNA]</scope>
</reference>
<reference key="6">
    <citation type="journal article" date="2004" name="Genome Res.">
        <title>The status, quality, and expansion of the NIH full-length cDNA project: the Mammalian Gene Collection (MGC).</title>
        <authorList>
            <consortium name="The MGC Project Team"/>
        </authorList>
    </citation>
    <scope>NUCLEOTIDE SEQUENCE [LARGE SCALE MRNA] (ISOFORM SURF5A)</scope>
    <source>
        <tissue>Muscle</tissue>
        <tissue>Skin</tissue>
    </source>
</reference>
<reference key="7">
    <citation type="journal article" date="2003" name="J. Biol. Chem.">
        <title>Identification of mammalian Mediator subunits with similarities to yeast Mediator subunits Srb5, Srb6, Med11, and Rox3.</title>
        <authorList>
            <person name="Sato S."/>
            <person name="Tomomori-Sato C."/>
            <person name="Banks C.A.S."/>
            <person name="Sorokina I."/>
            <person name="Parmely T.J."/>
            <person name="Kong S.E."/>
            <person name="Jin J."/>
            <person name="Cai Y."/>
            <person name="Lane W.S."/>
            <person name="Brower C.S."/>
            <person name="Conaway R.C."/>
            <person name="Conaway J.W."/>
        </authorList>
    </citation>
    <scope>INTERACTION WITH MED10; MED11 AND MED30</scope>
</reference>
<reference key="8">
    <citation type="journal article" date="2005" name="Mol. Cell">
        <title>MED1/TRAP220 exists predominantly in a TRAP/Mediator subpopulation enriched in RNA polymerase II and is required for ER-mediated transcription.</title>
        <authorList>
            <person name="Zhang X."/>
            <person name="Krutchinsky A."/>
            <person name="Fukuda A."/>
            <person name="Chen W."/>
            <person name="Yamamura S."/>
            <person name="Chait B.T."/>
            <person name="Roeder R.G."/>
        </authorList>
    </citation>
    <scope>IDENTIFICATION BY MASS SPECTROMETRY</scope>
    <scope>IDENTIFICATION IN THE MEDIATOR COMPLEX</scope>
    <scope>ASSOCIATION OF THE MEDIATOR COMPLEX WITH RNA POLYMERASE II</scope>
</reference>
<reference key="9">
    <citation type="journal article" date="2011" name="BMC Syst. Biol.">
        <title>Initial characterization of the human central proteome.</title>
        <authorList>
            <person name="Burkard T.R."/>
            <person name="Planyavsky M."/>
            <person name="Kaupe I."/>
            <person name="Breitwieser F.P."/>
            <person name="Buerckstuemmer T."/>
            <person name="Bennett K.L."/>
            <person name="Superti-Furga G."/>
            <person name="Colinge J."/>
        </authorList>
    </citation>
    <scope>IDENTIFICATION BY MASS SPECTROMETRY [LARGE SCALE ANALYSIS]</scope>
</reference>
<dbReference type="EMBL" id="X85178">
    <property type="protein sequence ID" value="CAA59462.1"/>
    <property type="molecule type" value="mRNA"/>
</dbReference>
<dbReference type="EMBL" id="AJ224639">
    <property type="protein sequence ID" value="CAA12052.1"/>
    <property type="molecule type" value="Genomic_DNA"/>
</dbReference>
<dbReference type="EMBL" id="AJ224639">
    <property type="protein sequence ID" value="CAA12053.1"/>
    <property type="molecule type" value="Genomic_DNA"/>
</dbReference>
<dbReference type="EMBL" id="AJ224358">
    <property type="protein sequence ID" value="CAA11915.1"/>
    <property type="molecule type" value="mRNA"/>
</dbReference>
<dbReference type="EMBL" id="AJ224359">
    <property type="protein sequence ID" value="CAA11916.1"/>
    <property type="molecule type" value="mRNA"/>
</dbReference>
<dbReference type="EMBL" id="AK124518">
    <property type="protein sequence ID" value="BAG54045.1"/>
    <property type="molecule type" value="mRNA"/>
</dbReference>
<dbReference type="EMBL" id="AK126069">
    <property type="protein sequence ID" value="BAG54286.1"/>
    <property type="molecule type" value="mRNA"/>
</dbReference>
<dbReference type="EMBL" id="AL158826">
    <property type="protein sequence ID" value="CAI12827.1"/>
    <property type="molecule type" value="Genomic_DNA"/>
</dbReference>
<dbReference type="EMBL" id="CH471090">
    <property type="protein sequence ID" value="EAW88056.1"/>
    <property type="molecule type" value="Genomic_DNA"/>
</dbReference>
<dbReference type="EMBL" id="CH471090">
    <property type="protein sequence ID" value="EAW88060.1"/>
    <property type="molecule type" value="Genomic_DNA"/>
</dbReference>
<dbReference type="EMBL" id="BC024225">
    <property type="protein sequence ID" value="AAH24225.1"/>
    <property type="molecule type" value="mRNA"/>
</dbReference>
<dbReference type="EMBL" id="BC040111">
    <property type="protein sequence ID" value="AAH40111.1"/>
    <property type="molecule type" value="mRNA"/>
</dbReference>
<dbReference type="CCDS" id="CCDS6963.1">
    <molecule id="Q15528-1"/>
</dbReference>
<dbReference type="CCDS" id="CCDS6964.1">
    <molecule id="Q15528-2"/>
</dbReference>
<dbReference type="RefSeq" id="NP_598395.1">
    <molecule id="Q15528-1"/>
    <property type="nucleotide sequence ID" value="NM_133640.5"/>
</dbReference>
<dbReference type="RefSeq" id="NP_852468.1">
    <molecule id="Q15528-2"/>
    <property type="nucleotide sequence ID" value="NM_181491.3"/>
</dbReference>
<dbReference type="PDB" id="7EMF">
    <property type="method" value="EM"/>
    <property type="resolution" value="3.50 A"/>
    <property type="chains" value="V=1-200"/>
</dbReference>
<dbReference type="PDB" id="7ENA">
    <property type="method" value="EM"/>
    <property type="resolution" value="4.07 A"/>
    <property type="chains" value="v=1-200"/>
</dbReference>
<dbReference type="PDB" id="7ENC">
    <property type="method" value="EM"/>
    <property type="resolution" value="4.13 A"/>
    <property type="chains" value="v=1-200"/>
</dbReference>
<dbReference type="PDB" id="7ENJ">
    <property type="method" value="EM"/>
    <property type="resolution" value="4.40 A"/>
    <property type="chains" value="V=1-200"/>
</dbReference>
<dbReference type="PDB" id="7LBM">
    <property type="method" value="EM"/>
    <property type="resolution" value="4.80 A"/>
    <property type="chains" value="m=1-200"/>
</dbReference>
<dbReference type="PDB" id="7NVR">
    <property type="method" value="EM"/>
    <property type="resolution" value="4.50 A"/>
    <property type="chains" value="g=1-200"/>
</dbReference>
<dbReference type="PDB" id="8GXQ">
    <property type="method" value="EM"/>
    <property type="resolution" value="5.04 A"/>
    <property type="chains" value="v=1-200"/>
</dbReference>
<dbReference type="PDB" id="8GXS">
    <property type="method" value="EM"/>
    <property type="resolution" value="4.16 A"/>
    <property type="chains" value="v=1-200"/>
</dbReference>
<dbReference type="PDB" id="8T9D">
    <property type="method" value="EM"/>
    <property type="resolution" value="4.66 A"/>
    <property type="chains" value="Q=1-200"/>
</dbReference>
<dbReference type="PDB" id="8TQW">
    <property type="method" value="EM"/>
    <property type="resolution" value="8.20 A"/>
    <property type="chains" value="V=1-200"/>
</dbReference>
<dbReference type="PDB" id="8TRH">
    <property type="method" value="EM"/>
    <property type="resolution" value="3.70 A"/>
    <property type="chains" value="V=1-200"/>
</dbReference>
<dbReference type="PDBsum" id="7EMF"/>
<dbReference type="PDBsum" id="7ENA"/>
<dbReference type="PDBsum" id="7ENC"/>
<dbReference type="PDBsum" id="7ENJ"/>
<dbReference type="PDBsum" id="7LBM"/>
<dbReference type="PDBsum" id="7NVR"/>
<dbReference type="PDBsum" id="8GXQ"/>
<dbReference type="PDBsum" id="8GXS"/>
<dbReference type="PDBsum" id="8T9D"/>
<dbReference type="PDBsum" id="8TQW"/>
<dbReference type="PDBsum" id="8TRH"/>
<dbReference type="EMDB" id="EMD-12610"/>
<dbReference type="EMDB" id="EMD-23255"/>
<dbReference type="EMDB" id="EMD-31191"/>
<dbReference type="EMDB" id="EMD-31204"/>
<dbReference type="EMDB" id="EMD-31207"/>
<dbReference type="EMDB" id="EMD-31211"/>
<dbReference type="EMDB" id="EMD-34359"/>
<dbReference type="EMDB" id="EMD-34360"/>
<dbReference type="EMDB" id="EMD-41107"/>
<dbReference type="EMDB" id="EMD-41565"/>
<dbReference type="EMDB" id="EMD-41580"/>
<dbReference type="SMR" id="Q15528"/>
<dbReference type="BioGRID" id="112704">
    <property type="interactions" value="89"/>
</dbReference>
<dbReference type="ComplexPortal" id="CPX-3227">
    <property type="entry name" value="Core mediator complex"/>
</dbReference>
<dbReference type="CORUM" id="Q15528"/>
<dbReference type="FunCoup" id="Q15528">
    <property type="interactions" value="2929"/>
</dbReference>
<dbReference type="IntAct" id="Q15528">
    <property type="interactions" value="65"/>
</dbReference>
<dbReference type="MINT" id="Q15528"/>
<dbReference type="STRING" id="9606.ENSP00000482438"/>
<dbReference type="GlyGen" id="Q15528">
    <property type="glycosylation" value="3 sites, 1 O-linked glycan (2 sites)"/>
</dbReference>
<dbReference type="iPTMnet" id="Q15528"/>
<dbReference type="PhosphoSitePlus" id="Q15528"/>
<dbReference type="BioMuta" id="MED22"/>
<dbReference type="DMDM" id="6175074"/>
<dbReference type="jPOST" id="Q15528"/>
<dbReference type="MassIVE" id="Q15528"/>
<dbReference type="PaxDb" id="9606-ENSP00000482438"/>
<dbReference type="PeptideAtlas" id="Q15528"/>
<dbReference type="ProteomicsDB" id="60619">
    <molecule id="Q15528-1"/>
</dbReference>
<dbReference type="ProteomicsDB" id="60620">
    <molecule id="Q15528-2"/>
</dbReference>
<dbReference type="Pumba" id="Q15528"/>
<dbReference type="TopDownProteomics" id="Q15528-2">
    <molecule id="Q15528-2"/>
</dbReference>
<dbReference type="Antibodypedia" id="18330">
    <property type="antibodies" value="181 antibodies from 27 providers"/>
</dbReference>
<dbReference type="DNASU" id="6837"/>
<dbReference type="Ensembl" id="ENST00000343730.10">
    <molecule id="Q15528-1"/>
    <property type="protein sequence ID" value="ENSP00000342343.5"/>
    <property type="gene ID" value="ENSG00000148297.16"/>
</dbReference>
<dbReference type="Ensembl" id="ENST00000610672.4">
    <molecule id="Q15528-1"/>
    <property type="protein sequence ID" value="ENSP00000482438.1"/>
    <property type="gene ID" value="ENSG00000148297.16"/>
</dbReference>
<dbReference type="Ensembl" id="ENST00000610888.4">
    <molecule id="Q15528-2"/>
    <property type="protein sequence ID" value="ENSP00000478773.1"/>
    <property type="gene ID" value="ENSG00000148297.16"/>
</dbReference>
<dbReference type="Ensembl" id="ENST00000614493.4">
    <molecule id="Q15528-2"/>
    <property type="protein sequence ID" value="ENSP00000481493.1"/>
    <property type="gene ID" value="ENSG00000148297.16"/>
</dbReference>
<dbReference type="Ensembl" id="ENST00000626118.2">
    <molecule id="Q15528-2"/>
    <property type="protein sequence ID" value="ENSP00000485715.1"/>
    <property type="gene ID" value="ENSG00000281022.3"/>
</dbReference>
<dbReference type="Ensembl" id="ENST00000629522.2">
    <molecule id="Q15528-1"/>
    <property type="protein sequence ID" value="ENSP00000485880.1"/>
    <property type="gene ID" value="ENSG00000281022.3"/>
</dbReference>
<dbReference type="Ensembl" id="ENST00000629975.2">
    <molecule id="Q15528-2"/>
    <property type="protein sequence ID" value="ENSP00000486722.1"/>
    <property type="gene ID" value="ENSG00000281022.3"/>
</dbReference>
<dbReference type="Ensembl" id="ENST00000631196.3">
    <molecule id="Q15528-1"/>
    <property type="protein sequence ID" value="ENSP00000487580.1"/>
    <property type="gene ID" value="ENSG00000281022.3"/>
</dbReference>
<dbReference type="GeneID" id="6837"/>
<dbReference type="KEGG" id="hsa:6837"/>
<dbReference type="MANE-Select" id="ENST00000343730.10">
    <property type="protein sequence ID" value="ENSP00000342343.5"/>
    <property type="RefSeq nucleotide sequence ID" value="NM_133640.5"/>
    <property type="RefSeq protein sequence ID" value="NP_598395.1"/>
</dbReference>
<dbReference type="UCSC" id="uc004cdc.5">
    <molecule id="Q15528-1"/>
    <property type="organism name" value="human"/>
</dbReference>
<dbReference type="AGR" id="HGNC:11477"/>
<dbReference type="CTD" id="6837"/>
<dbReference type="DisGeNET" id="6837"/>
<dbReference type="GeneCards" id="MED22"/>
<dbReference type="HGNC" id="HGNC:11477">
    <property type="gene designation" value="MED22"/>
</dbReference>
<dbReference type="HPA" id="ENSG00000148297">
    <property type="expression patterns" value="Low tissue specificity"/>
</dbReference>
<dbReference type="MIM" id="185641">
    <property type="type" value="gene"/>
</dbReference>
<dbReference type="neXtProt" id="NX_Q15528"/>
<dbReference type="OpenTargets" id="ENSG00000148297"/>
<dbReference type="PharmGKB" id="PA162395486"/>
<dbReference type="VEuPathDB" id="HostDB:ENSG00000148297"/>
<dbReference type="eggNOG" id="KOG3304">
    <property type="taxonomic scope" value="Eukaryota"/>
</dbReference>
<dbReference type="GeneTree" id="ENSGT00390000004339"/>
<dbReference type="HOGENOM" id="CLU_117242_0_0_1"/>
<dbReference type="InParanoid" id="Q15528"/>
<dbReference type="OMA" id="KQAECDQ"/>
<dbReference type="OrthoDB" id="203279at2759"/>
<dbReference type="PAN-GO" id="Q15528">
    <property type="GO annotations" value="1 GO annotation based on evolutionary models"/>
</dbReference>
<dbReference type="PhylomeDB" id="Q15528"/>
<dbReference type="TreeFam" id="TF323390"/>
<dbReference type="PathwayCommons" id="Q15528"/>
<dbReference type="Reactome" id="R-HSA-1989781">
    <property type="pathway name" value="PPARA activates gene expression"/>
</dbReference>
<dbReference type="Reactome" id="R-HSA-381340">
    <property type="pathway name" value="Transcriptional regulation of white adipocyte differentiation"/>
</dbReference>
<dbReference type="Reactome" id="R-HSA-9833110">
    <property type="pathway name" value="RSV-host interactions"/>
</dbReference>
<dbReference type="SignaLink" id="Q15528"/>
<dbReference type="SIGNOR" id="Q15528"/>
<dbReference type="BioGRID-ORCS" id="6837">
    <property type="hits" value="712 hits in 1170 CRISPR screens"/>
</dbReference>
<dbReference type="ChiTaRS" id="MED22">
    <property type="organism name" value="human"/>
</dbReference>
<dbReference type="GeneWiki" id="MED22"/>
<dbReference type="GenomeRNAi" id="6837"/>
<dbReference type="Pharos" id="Q15528">
    <property type="development level" value="Tbio"/>
</dbReference>
<dbReference type="PRO" id="PR:Q15528"/>
<dbReference type="Proteomes" id="UP000005640">
    <property type="component" value="Chromosome 9"/>
</dbReference>
<dbReference type="RNAct" id="Q15528">
    <property type="molecule type" value="protein"/>
</dbReference>
<dbReference type="Bgee" id="ENSG00000148297">
    <property type="expression patterns" value="Expressed in cortical plate and 98 other cell types or tissues"/>
</dbReference>
<dbReference type="ExpressionAtlas" id="Q15528">
    <property type="expression patterns" value="baseline and differential"/>
</dbReference>
<dbReference type="GO" id="GO:0070847">
    <property type="term" value="C:core mediator complex"/>
    <property type="evidence" value="ECO:0000353"/>
    <property type="project" value="ComplexPortal"/>
</dbReference>
<dbReference type="GO" id="GO:0005737">
    <property type="term" value="C:cytoplasm"/>
    <property type="evidence" value="ECO:0000304"/>
    <property type="project" value="ProtInc"/>
</dbReference>
<dbReference type="GO" id="GO:0016592">
    <property type="term" value="C:mediator complex"/>
    <property type="evidence" value="ECO:0000314"/>
    <property type="project" value="MGI"/>
</dbReference>
<dbReference type="GO" id="GO:0005654">
    <property type="term" value="C:nucleoplasm"/>
    <property type="evidence" value="ECO:0000304"/>
    <property type="project" value="Reactome"/>
</dbReference>
<dbReference type="GO" id="GO:0005634">
    <property type="term" value="C:nucleus"/>
    <property type="evidence" value="ECO:0000314"/>
    <property type="project" value="ComplexPortal"/>
</dbReference>
<dbReference type="GO" id="GO:0003712">
    <property type="term" value="F:transcription coregulator activity"/>
    <property type="evidence" value="ECO:0007669"/>
    <property type="project" value="InterPro"/>
</dbReference>
<dbReference type="GO" id="GO:0032968">
    <property type="term" value="P:positive regulation of transcription elongation by RNA polymerase II"/>
    <property type="evidence" value="ECO:0000303"/>
    <property type="project" value="ComplexPortal"/>
</dbReference>
<dbReference type="GO" id="GO:0060261">
    <property type="term" value="P:positive regulation of transcription initiation by RNA polymerase II"/>
    <property type="evidence" value="ECO:0000303"/>
    <property type="project" value="ComplexPortal"/>
</dbReference>
<dbReference type="GO" id="GO:0051123">
    <property type="term" value="P:RNA polymerase II preinitiation complex assembly"/>
    <property type="evidence" value="ECO:0000303"/>
    <property type="project" value="ComplexPortal"/>
</dbReference>
<dbReference type="InterPro" id="IPR009332">
    <property type="entry name" value="Med22"/>
</dbReference>
<dbReference type="PANTHER" id="PTHR12434">
    <property type="entry name" value="MEDIATOR OF RNA POLYMERASE II TRANSCRIPTION SUBUNIT 22"/>
    <property type="match status" value="1"/>
</dbReference>
<dbReference type="PANTHER" id="PTHR12434:SF6">
    <property type="entry name" value="MEDIATOR OF RNA POLYMERASE II TRANSCRIPTION SUBUNIT 22"/>
    <property type="match status" value="1"/>
</dbReference>
<dbReference type="Pfam" id="PF06179">
    <property type="entry name" value="Med22"/>
    <property type="match status" value="1"/>
</dbReference>
<feature type="chain" id="PRO_0000178838" description="Mediator of RNA polymerase II transcription subunit 22">
    <location>
        <begin position="1"/>
        <end position="200"/>
    </location>
</feature>
<feature type="region of interest" description="Disordered" evidence="2">
    <location>
        <begin position="166"/>
        <end position="200"/>
    </location>
</feature>
<feature type="coiled-coil region" evidence="1">
    <location>
        <begin position="93"/>
        <end position="122"/>
    </location>
</feature>
<feature type="splice variant" id="VSP_006309" description="In isoform Surf5A." evidence="4 5 6">
    <original>SSSLCEANDLPLCEAYGRLDLDTDSADGLSAPLLASPEPSAGPLQVAAPAHSHAGGPGPTEHA</original>
    <variation>RYK</variation>
    <location>
        <begin position="138"/>
        <end position="200"/>
    </location>
</feature>
<feature type="helix" evidence="8">
    <location>
        <begin position="11"/>
        <end position="39"/>
    </location>
</feature>
<feature type="strand" evidence="8">
    <location>
        <begin position="46"/>
        <end position="48"/>
    </location>
</feature>
<feature type="helix" evidence="8">
    <location>
        <begin position="50"/>
        <end position="89"/>
    </location>
</feature>
<feature type="helix" evidence="8">
    <location>
        <begin position="91"/>
        <end position="135"/>
    </location>
</feature>
<keyword id="KW-0002">3D-structure</keyword>
<keyword id="KW-0010">Activator</keyword>
<keyword id="KW-0025">Alternative splicing</keyword>
<keyword id="KW-0175">Coiled coil</keyword>
<keyword id="KW-0539">Nucleus</keyword>
<keyword id="KW-1267">Proteomics identification</keyword>
<keyword id="KW-1185">Reference proteome</keyword>
<keyword id="KW-0804">Transcription</keyword>
<keyword id="KW-0805">Transcription regulation</keyword>
<protein>
    <recommendedName>
        <fullName>Mediator of RNA polymerase II transcription subunit 22</fullName>
    </recommendedName>
    <alternativeName>
        <fullName>Mediator complex subunit 22</fullName>
    </alternativeName>
    <alternativeName>
        <fullName>Surfeit locus protein 5</fullName>
        <shortName>Surf-5</shortName>
    </alternativeName>
</protein>
<gene>
    <name type="primary">MED22</name>
    <name type="synonym">SURF5</name>
</gene>
<proteinExistence type="evidence at protein level"/>
<accession>Q15528</accession>
<accession>B3KW83</accession>
<accession>B3KWX4</accession>
<accession>O76072</accession>
<accession>Q5T8U0</accession>
<comment type="function">
    <text>Component of the Mediator complex, a coactivator involved in the regulated transcription of nearly all RNA polymerase II-dependent genes. Mediator functions as a bridge to convey information from gene-specific regulatory proteins to the basal RNA polymerase II transcription machinery. Mediator is recruited to promoters by direct interactions with regulatory proteins and serves as a scaffold for the assembly of a functional preinitiation complex with RNA polymerase II and the general transcription factors.</text>
</comment>
<comment type="subunit">
    <text evidence="3">Component of the Mediator complex, which is composed of MED1, MED4, MED6, MED7, MED8, MED9, MED10, MED11, MED12, MED13, MED13L, MED14, MED15, MED16, MED17, MED18, MED19, MED20, MED21, MED22, MED23, MED24, MED25, MED26, MED27, MED29, MED30, MED31, CCNC, CDK8 and CDC2L6/CDK11. The MED12, MED13, CCNC and CDK8 subunits form a distinct module termed the CDK8 module. Mediator containing the CDK8 module is less active than Mediator lacking this module in supporting transcriptional activation. Individual preparations of the Mediator complex lacking one or more distinct subunits have been variously termed ARC, CRSP, DRIP, PC2, SMCC and TRAP.</text>
</comment>
<comment type="interaction">
    <interactant intactId="EBI-394687">
        <id>Q15528</id>
    </interactant>
    <interactant intactId="EBI-394704">
        <id>Q9P086</id>
        <label>MED11</label>
    </interactant>
    <organismsDiffer>false</organismsDiffer>
    <experiments>6</experiments>
</comment>
<comment type="interaction">
    <interactant intactId="EBI-394687">
        <id>Q15528</id>
    </interactant>
    <interactant intactId="EBI-394562">
        <id>Q9NVC6</id>
        <label>MED17</label>
    </interactant>
    <organismsDiffer>false</organismsDiffer>
    <experiments>7</experiments>
</comment>
<comment type="interaction">
    <interactant intactId="EBI-394687">
        <id>Q15528</id>
    </interactant>
    <interactant intactId="EBI-394640">
        <id>Q9BUE0</id>
        <label>MED18</label>
    </interactant>
    <organismsDiffer>false</organismsDiffer>
    <experiments>7</experiments>
</comment>
<comment type="interaction">
    <interactant intactId="EBI-394687">
        <id>Q15528</id>
    </interactant>
    <interactant intactId="EBI-394603">
        <id>Q6P2C8</id>
        <label>MED27</label>
    </interactant>
    <organismsDiffer>false</organismsDiffer>
    <experiments>7</experiments>
</comment>
<comment type="interaction">
    <interactant intactId="EBI-394687">
        <id>Q15528</id>
    </interactant>
    <interactant intactId="EBI-514199">
        <id>Q9H204</id>
        <label>MED28</label>
    </interactant>
    <organismsDiffer>false</organismsDiffer>
    <experiments>6</experiments>
</comment>
<comment type="interaction">
    <interactant intactId="EBI-394687">
        <id>Q15528</id>
    </interactant>
    <interactant intactId="EBI-394656">
        <id>Q9NX70</id>
        <label>MED29</label>
    </interactant>
    <organismsDiffer>false</organismsDiffer>
    <experiments>9</experiments>
</comment>
<comment type="interaction">
    <interactant intactId="EBI-394687">
        <id>Q15528</id>
    </interactant>
    <interactant intactId="EBI-6260909">
        <id>Q9D8C6</id>
        <label>Med11</label>
    </interactant>
    <organismsDiffer>true</organismsDiffer>
    <experiments>2</experiments>
</comment>
<comment type="interaction">
    <interactant intactId="EBI-394687">
        <id>Q15528</id>
    </interactant>
    <interactant intactId="EBI-309220">
        <id>Q9CQI9</id>
        <label>Med30</label>
    </interactant>
    <organismsDiffer>true</organismsDiffer>
    <experiments>6</experiments>
</comment>
<comment type="interaction">
    <interactant intactId="EBI-394687">
        <id>Q15528</id>
    </interactant>
    <interactant intactId="EBI-7990252">
        <id>Q9D7W5</id>
        <label>Med8</label>
    </interactant>
    <organismsDiffer>true</organismsDiffer>
    <experiments>2</experiments>
</comment>
<comment type="interaction">
    <interactant intactId="EBI-12954271">
        <id>Q15528-2</id>
    </interactant>
    <interactant intactId="EBI-740220">
        <id>O14964</id>
        <label>HGS</label>
    </interactant>
    <organismsDiffer>false</organismsDiffer>
    <experiments>3</experiments>
</comment>
<comment type="interaction">
    <interactant intactId="EBI-12954271">
        <id>Q15528-2</id>
    </interactant>
    <interactant intactId="EBI-466029">
        <id>P42858</id>
        <label>HTT</label>
    </interactant>
    <organismsDiffer>false</organismsDiffer>
    <experiments>12</experiments>
</comment>
<comment type="interaction">
    <interactant intactId="EBI-12954271">
        <id>Q15528-2</id>
    </interactant>
    <interactant intactId="EBI-741158">
        <id>Q96HA8</id>
        <label>NTAQ1</label>
    </interactant>
    <organismsDiffer>false</organismsDiffer>
    <experiments>3</experiments>
</comment>
<comment type="interaction">
    <interactant intactId="EBI-12954271">
        <id>Q15528-2</id>
    </interactant>
    <interactant intactId="EBI-749195">
        <id>P60891</id>
        <label>PRPS1</label>
    </interactant>
    <organismsDiffer>false</organismsDiffer>
    <experiments>3</experiments>
</comment>
<comment type="interaction">
    <interactant intactId="EBI-12954271">
        <id>Q15528-2</id>
    </interactant>
    <interactant intactId="EBI-707554">
        <id>O14530</id>
        <label>TXNDC9</label>
    </interactant>
    <organismsDiffer>false</organismsDiffer>
    <experiments>3</experiments>
</comment>
<comment type="interaction">
    <interactant intactId="EBI-12954271">
        <id>Q15528-2</id>
    </interactant>
    <interactant intactId="EBI-720609">
        <id>O76024</id>
        <label>WFS1</label>
    </interactant>
    <organismsDiffer>false</organismsDiffer>
    <experiments>3</experiments>
</comment>
<comment type="subcellular location">
    <subcellularLocation>
        <location evidence="7">Nucleus</location>
    </subcellularLocation>
</comment>
<comment type="alternative products">
    <event type="alternative splicing"/>
    <isoform>
        <id>Q15528-1</id>
        <name>Surf5B</name>
        <sequence type="displayed"/>
    </isoform>
    <isoform>
        <id>Q15528-2</id>
        <name>Surf5A</name>
        <sequence type="described" ref="VSP_006309"/>
    </isoform>
</comment>
<comment type="similarity">
    <text evidence="7">Belongs to the Mediator complex subunit 22 family.</text>
</comment>